<sequence length="266" mass="29479">MGILVILVDLQCCRCDAKIRKVLGCLEEEYCIEKVEYDVKNNRVIVRGKFDPEKLCKKIWCKAGKIIKEILIVDVWPPPLPQPPPPCKPPPCEKPPEDCKPKPCHCCSCEKPKPKPKPCHCEKPKPCHCEKPKPCEKPPPCKPEEPPKPPPEKPPPKPECKLVPYPYPVPYPYAGQWCCPKPEPPKPPPEPPKEPEPPKPCGCSHAFVCVCKPAPPPPPPCGCSGGHGNCGCGIRPWPPQVWPPPPVCPPPPWCYTEDNANACSIM</sequence>
<gene>
    <name evidence="6" type="primary">PI21</name>
    <name type="synonym">rMg40</name>
    <name type="ordered locus">LOC_Os04g32850</name>
    <name evidence="8" type="ordered locus">Os04g0401000</name>
    <name evidence="11" type="ORF">OsJ_14657</name>
    <name evidence="10" type="ORF">OSJNBb0014D23.16</name>
    <name evidence="9" type="ORF">OSNPB_040401000</name>
</gene>
<organism>
    <name type="scientific">Oryza sativa subsp. japonica</name>
    <name type="common">Rice</name>
    <dbReference type="NCBI Taxonomy" id="39947"/>
    <lineage>
        <taxon>Eukaryota</taxon>
        <taxon>Viridiplantae</taxon>
        <taxon>Streptophyta</taxon>
        <taxon>Embryophyta</taxon>
        <taxon>Tracheophyta</taxon>
        <taxon>Spermatophyta</taxon>
        <taxon>Magnoliopsida</taxon>
        <taxon>Liliopsida</taxon>
        <taxon>Poales</taxon>
        <taxon>Poaceae</taxon>
        <taxon>BOP clade</taxon>
        <taxon>Oryzoideae</taxon>
        <taxon>Oryzeae</taxon>
        <taxon>Oryzinae</taxon>
        <taxon>Oryza</taxon>
        <taxon>Oryza sativa</taxon>
    </lineage>
</organism>
<evidence type="ECO:0000255" key="1">
    <source>
        <dbReference type="PROSITE-ProRule" id="PRU00280"/>
    </source>
</evidence>
<evidence type="ECO:0000256" key="2">
    <source>
        <dbReference type="SAM" id="MobiDB-lite"/>
    </source>
</evidence>
<evidence type="ECO:0000269" key="3">
    <source>
    </source>
</evidence>
<evidence type="ECO:0000269" key="4">
    <source>
    </source>
</evidence>
<evidence type="ECO:0000269" key="5">
    <source>
    </source>
</evidence>
<evidence type="ECO:0000303" key="6">
    <source>
    </source>
</evidence>
<evidence type="ECO:0000305" key="7"/>
<evidence type="ECO:0000312" key="8">
    <source>
        <dbReference type="EMBL" id="BAF14599.1"/>
    </source>
</evidence>
<evidence type="ECO:0000312" key="9">
    <source>
        <dbReference type="EMBL" id="BAS89039.1"/>
    </source>
</evidence>
<evidence type="ECO:0000312" key="10">
    <source>
        <dbReference type="EMBL" id="CAE05282.1"/>
    </source>
</evidence>
<evidence type="ECO:0000312" key="11">
    <source>
        <dbReference type="EMBL" id="EEE60928.1"/>
    </source>
</evidence>
<dbReference type="EMBL" id="AB430852">
    <property type="protein sequence ID" value="BAG72122.1"/>
    <property type="molecule type" value="Genomic_DNA"/>
</dbReference>
<dbReference type="EMBL" id="AB430853">
    <property type="protein sequence ID" value="BAG72123.1"/>
    <property type="molecule type" value="Genomic_DNA"/>
</dbReference>
<dbReference type="EMBL" id="AL731642">
    <property type="protein sequence ID" value="CAE05282.1"/>
    <property type="molecule type" value="Genomic_DNA"/>
</dbReference>
<dbReference type="EMBL" id="AP008210">
    <property type="protein sequence ID" value="BAF14599.1"/>
    <property type="molecule type" value="Genomic_DNA"/>
</dbReference>
<dbReference type="EMBL" id="AP014960">
    <property type="protein sequence ID" value="BAS89038.1"/>
    <property type="molecule type" value="Genomic_DNA"/>
</dbReference>
<dbReference type="EMBL" id="AP014960">
    <property type="protein sequence ID" value="BAS89039.1"/>
    <property type="molecule type" value="Genomic_DNA"/>
</dbReference>
<dbReference type="EMBL" id="CM000141">
    <property type="protein sequence ID" value="EEE60928.1"/>
    <property type="molecule type" value="Genomic_DNA"/>
</dbReference>
<dbReference type="EMBL" id="AK070581">
    <property type="protein sequence ID" value="BAG92042.1"/>
    <property type="molecule type" value="mRNA"/>
</dbReference>
<dbReference type="RefSeq" id="XP_015634053.1">
    <property type="nucleotide sequence ID" value="XM_015778567.1"/>
</dbReference>
<dbReference type="SMR" id="Q7XL73"/>
<dbReference type="STRING" id="39947.Q7XL73"/>
<dbReference type="PaxDb" id="39947-Q7XL73"/>
<dbReference type="EnsemblPlants" id="Os04t0401000-01">
    <molecule id="Q7XL73-1"/>
    <property type="protein sequence ID" value="Os04t0401000-01"/>
    <property type="gene ID" value="Os04g0401000"/>
</dbReference>
<dbReference type="Gramene" id="Os04t0401000-01">
    <molecule id="Q7XL73-1"/>
    <property type="protein sequence ID" value="Os04t0401000-01"/>
    <property type="gene ID" value="Os04g0401000"/>
</dbReference>
<dbReference type="KEGG" id="dosa:Os04g0401000"/>
<dbReference type="eggNOG" id="ENOG502SFJM">
    <property type="taxonomic scope" value="Eukaryota"/>
</dbReference>
<dbReference type="InParanoid" id="Q7XL73"/>
<dbReference type="OMA" id="CGIRPWP"/>
<dbReference type="OrthoDB" id="785270at2759"/>
<dbReference type="Proteomes" id="UP000000763">
    <property type="component" value="Chromosome 4"/>
</dbReference>
<dbReference type="Proteomes" id="UP000007752">
    <property type="component" value="Chromosome 4"/>
</dbReference>
<dbReference type="Proteomes" id="UP000059680">
    <property type="component" value="Chromosome 4"/>
</dbReference>
<dbReference type="GO" id="GO:0046872">
    <property type="term" value="F:metal ion binding"/>
    <property type="evidence" value="ECO:0007669"/>
    <property type="project" value="UniProtKB-KW"/>
</dbReference>
<dbReference type="GO" id="GO:0050832">
    <property type="term" value="P:defense response to fungus"/>
    <property type="evidence" value="ECO:0000270"/>
    <property type="project" value="UniProtKB"/>
</dbReference>
<dbReference type="GO" id="GO:1900150">
    <property type="term" value="P:regulation of defense response to fungus"/>
    <property type="evidence" value="ECO:0000315"/>
    <property type="project" value="UniProtKB"/>
</dbReference>
<dbReference type="Gene3D" id="3.30.70.100">
    <property type="match status" value="1"/>
</dbReference>
<dbReference type="InterPro" id="IPR006121">
    <property type="entry name" value="HMA_dom"/>
</dbReference>
<dbReference type="InterPro" id="IPR044169">
    <property type="entry name" value="PI21"/>
</dbReference>
<dbReference type="PANTHER" id="PTHR47488">
    <property type="entry name" value="HEAVY METAL TRANSPORT/DETOXIFICATION SUPERFAMILY PROTEIN"/>
    <property type="match status" value="1"/>
</dbReference>
<dbReference type="PANTHER" id="PTHR47488:SF12">
    <property type="entry name" value="PROTEIN PYRICULARIA ORYZAE RESISTANCE 21"/>
    <property type="match status" value="1"/>
</dbReference>
<dbReference type="PROSITE" id="PS50846">
    <property type="entry name" value="HMA_2"/>
    <property type="match status" value="1"/>
</dbReference>
<comment type="function">
    <text evidence="3 5">Involved in defense responses (PubMed:19696351, PubMed:26740780). Contributes to slowing defense responses toward Magnaporthe oryzae (PubMed:19696351).</text>
</comment>
<comment type="alternative products">
    <event type="alternative splicing"/>
    <isoform>
        <id>Q7XL73-1</id>
        <name>1</name>
        <sequence type="displayed"/>
    </isoform>
    <isoform>
        <id>Q7XL73-2</id>
        <name>2</name>
        <sequence type="described" ref="VSP_058514 VSP_058515"/>
    </isoform>
    <isoform>
        <id>Q7XL73-3</id>
        <name>3</name>
        <sequence type="described" ref="VSP_058516"/>
    </isoform>
</comment>
<comment type="induction">
    <text evidence="4">By Magnaporthe oryzae.</text>
</comment>
<comment type="disruption phenotype">
    <text evidence="3 5">The pi21 allele confers an improved non-race-specific blast resistance toward Magnaporthe oryzae (PubMed:19696351). Reduced salicylic acid (SA) responses (e.g. WRKY45 expression) but increased systemic acquired response (SAR, e.g. PR1b and PBZ1 accumulation), jasmonic acid (JA, e.g. JAmyb expression) and abscisic acid (ABA, e.g. SalT expression) responses in response to M.oryzae spores (PubMed:26740780).</text>
</comment>
<proteinExistence type="evidence at transcript level"/>
<accession>Q7XL73</accession>
<accession>B5UA05</accession>
<accession>B9FEZ5</accession>
<accession>Q0JDI8</accession>
<keyword id="KW-0025">Alternative splicing</keyword>
<keyword id="KW-0479">Metal-binding</keyword>
<keyword id="KW-0611">Plant defense</keyword>
<keyword id="KW-1185">Reference proteome</keyword>
<reference key="1">
    <citation type="journal article" date="2009" name="Science">
        <title>Loss of function of a proline-containing protein confers durable disease resistance in rice.</title>
        <authorList>
            <person name="Fukuoka S."/>
            <person name="Saka N."/>
            <person name="Koga H."/>
            <person name="Ono K."/>
            <person name="Shimizu T."/>
            <person name="Ebana K."/>
            <person name="Hayashi N."/>
            <person name="Takahashi A."/>
            <person name="Hirochika H."/>
            <person name="Okuno K."/>
            <person name="Yano M."/>
        </authorList>
    </citation>
    <scope>NUCLEOTIDE SEQUENCE [GENOMIC DNA] (ISOFORMS 1 AND 2)</scope>
    <scope>FUNCTION</scope>
    <scope>DISRUPTION PHENOTYPE</scope>
    <source>
        <strain>cv. Aichi asahi</strain>
    </source>
</reference>
<reference key="2">
    <citation type="journal article" date="2002" name="Nature">
        <title>Sequence and analysis of rice chromosome 4.</title>
        <authorList>
            <person name="Feng Q."/>
            <person name="Zhang Y."/>
            <person name="Hao P."/>
            <person name="Wang S."/>
            <person name="Fu G."/>
            <person name="Huang Y."/>
            <person name="Li Y."/>
            <person name="Zhu J."/>
            <person name="Liu Y."/>
            <person name="Hu X."/>
            <person name="Jia P."/>
            <person name="Zhang Y."/>
            <person name="Zhao Q."/>
            <person name="Ying K."/>
            <person name="Yu S."/>
            <person name="Tang Y."/>
            <person name="Weng Q."/>
            <person name="Zhang L."/>
            <person name="Lu Y."/>
            <person name="Mu J."/>
            <person name="Lu Y."/>
            <person name="Zhang L.S."/>
            <person name="Yu Z."/>
            <person name="Fan D."/>
            <person name="Liu X."/>
            <person name="Lu T."/>
            <person name="Li C."/>
            <person name="Wu Y."/>
            <person name="Sun T."/>
            <person name="Lei H."/>
            <person name="Li T."/>
            <person name="Hu H."/>
            <person name="Guan J."/>
            <person name="Wu M."/>
            <person name="Zhang R."/>
            <person name="Zhou B."/>
            <person name="Chen Z."/>
            <person name="Chen L."/>
            <person name="Jin Z."/>
            <person name="Wang R."/>
            <person name="Yin H."/>
            <person name="Cai Z."/>
            <person name="Ren S."/>
            <person name="Lv G."/>
            <person name="Gu W."/>
            <person name="Zhu G."/>
            <person name="Tu Y."/>
            <person name="Jia J."/>
            <person name="Zhang Y."/>
            <person name="Chen J."/>
            <person name="Kang H."/>
            <person name="Chen X."/>
            <person name="Shao C."/>
            <person name="Sun Y."/>
            <person name="Hu Q."/>
            <person name="Zhang X."/>
            <person name="Zhang W."/>
            <person name="Wang L."/>
            <person name="Ding C."/>
            <person name="Sheng H."/>
            <person name="Gu J."/>
            <person name="Chen S."/>
            <person name="Ni L."/>
            <person name="Zhu F."/>
            <person name="Chen W."/>
            <person name="Lan L."/>
            <person name="Lai Y."/>
            <person name="Cheng Z."/>
            <person name="Gu M."/>
            <person name="Jiang J."/>
            <person name="Li J."/>
            <person name="Hong G."/>
            <person name="Xue Y."/>
            <person name="Han B."/>
        </authorList>
    </citation>
    <scope>NUCLEOTIDE SEQUENCE [LARGE SCALE GENOMIC DNA]</scope>
    <source>
        <strain>cv. Nipponbare</strain>
    </source>
</reference>
<reference key="3">
    <citation type="journal article" date="2005" name="Nature">
        <title>The map-based sequence of the rice genome.</title>
        <authorList>
            <consortium name="International rice genome sequencing project (IRGSP)"/>
        </authorList>
    </citation>
    <scope>NUCLEOTIDE SEQUENCE [LARGE SCALE GENOMIC DNA]</scope>
    <source>
        <strain>cv. Nipponbare</strain>
    </source>
</reference>
<reference key="4">
    <citation type="journal article" date="2008" name="Nucleic Acids Res.">
        <title>The rice annotation project database (RAP-DB): 2008 update.</title>
        <authorList>
            <consortium name="The rice annotation project (RAP)"/>
        </authorList>
    </citation>
    <scope>GENOME REANNOTATION</scope>
    <source>
        <strain>cv. Nipponbare</strain>
    </source>
</reference>
<reference key="5">
    <citation type="journal article" date="2013" name="Rice">
        <title>Improvement of the Oryza sativa Nipponbare reference genome using next generation sequence and optical map data.</title>
        <authorList>
            <person name="Kawahara Y."/>
            <person name="de la Bastide M."/>
            <person name="Hamilton J.P."/>
            <person name="Kanamori H."/>
            <person name="McCombie W.R."/>
            <person name="Ouyang S."/>
            <person name="Schwartz D.C."/>
            <person name="Tanaka T."/>
            <person name="Wu J."/>
            <person name="Zhou S."/>
            <person name="Childs K.L."/>
            <person name="Davidson R.M."/>
            <person name="Lin H."/>
            <person name="Quesada-Ocampo L."/>
            <person name="Vaillancourt B."/>
            <person name="Sakai H."/>
            <person name="Lee S.S."/>
            <person name="Kim J."/>
            <person name="Numa H."/>
            <person name="Itoh T."/>
            <person name="Buell C.R."/>
            <person name="Matsumoto T."/>
        </authorList>
    </citation>
    <scope>GENOME REANNOTATION</scope>
    <source>
        <strain>cv. Nipponbare</strain>
    </source>
</reference>
<reference key="6">
    <citation type="journal article" date="2005" name="PLoS Biol.">
        <title>The genomes of Oryza sativa: a history of duplications.</title>
        <authorList>
            <person name="Yu J."/>
            <person name="Wang J."/>
            <person name="Lin W."/>
            <person name="Li S."/>
            <person name="Li H."/>
            <person name="Zhou J."/>
            <person name="Ni P."/>
            <person name="Dong W."/>
            <person name="Hu S."/>
            <person name="Zeng C."/>
            <person name="Zhang J."/>
            <person name="Zhang Y."/>
            <person name="Li R."/>
            <person name="Xu Z."/>
            <person name="Li S."/>
            <person name="Li X."/>
            <person name="Zheng H."/>
            <person name="Cong L."/>
            <person name="Lin L."/>
            <person name="Yin J."/>
            <person name="Geng J."/>
            <person name="Li G."/>
            <person name="Shi J."/>
            <person name="Liu J."/>
            <person name="Lv H."/>
            <person name="Li J."/>
            <person name="Wang J."/>
            <person name="Deng Y."/>
            <person name="Ran L."/>
            <person name="Shi X."/>
            <person name="Wang X."/>
            <person name="Wu Q."/>
            <person name="Li C."/>
            <person name="Ren X."/>
            <person name="Wang J."/>
            <person name="Wang X."/>
            <person name="Li D."/>
            <person name="Liu D."/>
            <person name="Zhang X."/>
            <person name="Ji Z."/>
            <person name="Zhao W."/>
            <person name="Sun Y."/>
            <person name="Zhang Z."/>
            <person name="Bao J."/>
            <person name="Han Y."/>
            <person name="Dong L."/>
            <person name="Ji J."/>
            <person name="Chen P."/>
            <person name="Wu S."/>
            <person name="Liu J."/>
            <person name="Xiao Y."/>
            <person name="Bu D."/>
            <person name="Tan J."/>
            <person name="Yang L."/>
            <person name="Ye C."/>
            <person name="Zhang J."/>
            <person name="Xu J."/>
            <person name="Zhou Y."/>
            <person name="Yu Y."/>
            <person name="Zhang B."/>
            <person name="Zhuang S."/>
            <person name="Wei H."/>
            <person name="Liu B."/>
            <person name="Lei M."/>
            <person name="Yu H."/>
            <person name="Li Y."/>
            <person name="Xu H."/>
            <person name="Wei S."/>
            <person name="He X."/>
            <person name="Fang L."/>
            <person name="Zhang Z."/>
            <person name="Zhang Y."/>
            <person name="Huang X."/>
            <person name="Su Z."/>
            <person name="Tong W."/>
            <person name="Li J."/>
            <person name="Tong Z."/>
            <person name="Li S."/>
            <person name="Ye J."/>
            <person name="Wang L."/>
            <person name="Fang L."/>
            <person name="Lei T."/>
            <person name="Chen C.-S."/>
            <person name="Chen H.-C."/>
            <person name="Xu Z."/>
            <person name="Li H."/>
            <person name="Huang H."/>
            <person name="Zhang F."/>
            <person name="Xu H."/>
            <person name="Li N."/>
            <person name="Zhao C."/>
            <person name="Li S."/>
            <person name="Dong L."/>
            <person name="Huang Y."/>
            <person name="Li L."/>
            <person name="Xi Y."/>
            <person name="Qi Q."/>
            <person name="Li W."/>
            <person name="Zhang B."/>
            <person name="Hu W."/>
            <person name="Zhang Y."/>
            <person name="Tian X."/>
            <person name="Jiao Y."/>
            <person name="Liang X."/>
            <person name="Jin J."/>
            <person name="Gao L."/>
            <person name="Zheng W."/>
            <person name="Hao B."/>
            <person name="Liu S.-M."/>
            <person name="Wang W."/>
            <person name="Yuan L."/>
            <person name="Cao M."/>
            <person name="McDermott J."/>
            <person name="Samudrala R."/>
            <person name="Wang J."/>
            <person name="Wong G.K.-S."/>
            <person name="Yang H."/>
        </authorList>
    </citation>
    <scope>NUCLEOTIDE SEQUENCE [LARGE SCALE GENOMIC DNA]</scope>
    <source>
        <strain>cv. Nipponbare</strain>
    </source>
</reference>
<reference key="7">
    <citation type="journal article" date="2003" name="Science">
        <title>Collection, mapping, and annotation of over 28,000 cDNA clones from japonica rice.</title>
        <authorList>
            <consortium name="The rice full-length cDNA consortium"/>
        </authorList>
    </citation>
    <scope>NUCLEOTIDE SEQUENCE [LARGE SCALE MRNA]</scope>
    <source>
        <strain>cv. Nipponbare</strain>
    </source>
</reference>
<reference key="8">
    <citation type="journal article" date="2008" name="Mol. Plant Microbe Interact.">
        <title>A genome-wide meta-analysis of rice blast resistance genes and quantitative trait loci provides new insights into partial and complete resistance.</title>
        <authorList>
            <person name="Ballini E."/>
            <person name="Morel J.-B."/>
            <person name="Droc G."/>
            <person name="Price A."/>
            <person name="Courtois B."/>
            <person name="Notteghem J.-L."/>
            <person name="Tharreau D."/>
        </authorList>
    </citation>
    <scope>REVIEW</scope>
</reference>
<reference key="9">
    <citation type="journal article" date="2013" name="Mol. Biol. Rep.">
        <title>Blast resistance in rice: a review of conventional breeding to molecular approaches.</title>
        <authorList>
            <person name="Miah G."/>
            <person name="Rafii M.Y."/>
            <person name="Ismail M.R."/>
            <person name="Puteh A.B."/>
            <person name="Rahim H.A."/>
            <person name="Asfaliza R."/>
            <person name="Latif M.A."/>
        </authorList>
    </citation>
    <scope>REVIEW</scope>
</reference>
<reference key="10">
    <citation type="journal article" date="2014" name="Biotechnol. Biotechnol. Equip.">
        <title>Expression analysis of innate immunity related genes in the true/field blast resistance gene-mediated defence response.</title>
        <authorList>
            <person name="Wang D."/>
            <person name="Qin Y."/>
            <person name="Han J."/>
            <person name="Zhang L."/>
            <person name="Xu X."/>
            <person name="Liu X."/>
            <person name="Wang C."/>
            <person name="Liu X."/>
        </authorList>
    </citation>
    <scope>FUNCTION</scope>
    <scope>DISRUPTION PHENOTYPE</scope>
    <source>
        <strain>cv. Aichi asahi</strain>
    </source>
</reference>
<reference key="11">
    <citation type="journal article" date="2015" name="PLoS ONE">
        <title>Differential gene expression reflects morphological characteristics and physiological processes in rice immunity against blast pathogen Magnaporthe oryzae.</title>
        <authorList>
            <person name="Azizi P."/>
            <person name="Rafii M.Y."/>
            <person name="Mahmood M."/>
            <person name="Abdullah S.N."/>
            <person name="Hanafi M.M."/>
            <person name="Nejat N."/>
            <person name="Latif M.A."/>
            <person name="Sahebi M."/>
        </authorList>
    </citation>
    <scope>INDUCTION BY MAGNAPORTHE ORYZAE</scope>
</reference>
<name>PI21_ORYSJ</name>
<protein>
    <recommendedName>
        <fullName evidence="6">Protein PYRICULARIA ORYZAE RESISTANCE 21</fullName>
        <shortName evidence="6">Pi21</shortName>
    </recommendedName>
</protein>
<feature type="chain" id="PRO_0000437419" description="Protein PYRICULARIA ORYZAE RESISTANCE 21">
    <location>
        <begin position="1"/>
        <end position="266"/>
    </location>
</feature>
<feature type="domain" description="HMA" evidence="1">
    <location>
        <begin position="1"/>
        <end position="68"/>
    </location>
</feature>
<feature type="region of interest" description="Disordered" evidence="2">
    <location>
        <begin position="129"/>
        <end position="156"/>
    </location>
</feature>
<feature type="compositionally biased region" description="Basic and acidic residues" evidence="2">
    <location>
        <begin position="142"/>
        <end position="156"/>
    </location>
</feature>
<feature type="binding site" evidence="1">
    <location>
        <position position="12"/>
    </location>
    <ligand>
        <name>a metal cation</name>
        <dbReference type="ChEBI" id="CHEBI:25213"/>
    </ligand>
</feature>
<feature type="binding site" evidence="1">
    <location>
        <position position="15"/>
    </location>
    <ligand>
        <name>a metal cation</name>
        <dbReference type="ChEBI" id="CHEBI:25213"/>
    </ligand>
</feature>
<feature type="splice variant" id="VSP_058514" description="In isoform 2.">
    <location>
        <begin position="77"/>
        <end position="83"/>
    </location>
</feature>
<feature type="splice variant" id="VSP_058515" description="In isoform 2.">
    <location>
        <begin position="136"/>
        <end position="151"/>
    </location>
</feature>
<feature type="splice variant" id="VSP_058516" description="In isoform 3.">
    <location>
        <begin position="187"/>
        <end position="242"/>
    </location>
</feature>
<feature type="sequence conflict" description="In Ref. 6; EEE60928." evidence="7" ref="6">
    <original>P</original>
    <variation>R</variation>
    <location>
        <position position="245"/>
    </location>
</feature>